<sequence length="366" mass="43077">MIIEIVTILNFKNIEEGSLSFSPKINYLLGDNGMGKTNLLDALYYLAFTKNHTNLTDSQLINYNKDFAVLHAFYKDKDNIEEIYCGIKLKQRKIFKRNKKEYKKLSEHIGLIPTVMVSPNDTNMIQFGSNERRKFADMLISQYDKEYLRTLIYYNQALQQRNFLLRNALPSLSGEEFEIWEEQMGTTGEIIYQKRKNFTTDFLPLFKEYYYTISDKNETIDLEYVSHLDDHSLFELLYEKRERDKILGFTSTGIHKDDFNFLLNNFLIRKIGSQGQNKTYLIALKLAQFSFLVQKGLSIPILLLDDLFDKLDAKRVEKIIRLLAQKTFGQIFITDTNRKHLDNILTKMQHAYKLFYVSNGTIREIL</sequence>
<evidence type="ECO:0000255" key="1">
    <source>
        <dbReference type="HAMAP-Rule" id="MF_00365"/>
    </source>
</evidence>
<name>RECF_AZOPC</name>
<keyword id="KW-0067">ATP-binding</keyword>
<keyword id="KW-0963">Cytoplasm</keyword>
<keyword id="KW-0227">DNA damage</keyword>
<keyword id="KW-0234">DNA repair</keyword>
<keyword id="KW-0235">DNA replication</keyword>
<keyword id="KW-0238">DNA-binding</keyword>
<keyword id="KW-0547">Nucleotide-binding</keyword>
<keyword id="KW-1185">Reference proteome</keyword>
<keyword id="KW-0742">SOS response</keyword>
<feature type="chain" id="PRO_1000205470" description="DNA replication and repair protein RecF">
    <location>
        <begin position="1"/>
        <end position="366"/>
    </location>
</feature>
<feature type="binding site" evidence="1">
    <location>
        <begin position="30"/>
        <end position="37"/>
    </location>
    <ligand>
        <name>ATP</name>
        <dbReference type="ChEBI" id="CHEBI:30616"/>
    </ligand>
</feature>
<accession>B6YRR8</accession>
<organism>
    <name type="scientific">Azobacteroides pseudotrichonymphae genomovar. CFP2</name>
    <dbReference type="NCBI Taxonomy" id="511995"/>
    <lineage>
        <taxon>Bacteria</taxon>
        <taxon>Pseudomonadati</taxon>
        <taxon>Bacteroidota</taxon>
        <taxon>Bacteroidia</taxon>
        <taxon>Bacteroidales</taxon>
        <taxon>Candidatus Azobacteroides</taxon>
    </lineage>
</organism>
<protein>
    <recommendedName>
        <fullName evidence="1">DNA replication and repair protein RecF</fullName>
    </recommendedName>
</protein>
<gene>
    <name evidence="1" type="primary">recF</name>
    <name type="ordered locus">CFPG_627</name>
</gene>
<dbReference type="EMBL" id="AP010656">
    <property type="protein sequence ID" value="BAG83890.1"/>
    <property type="molecule type" value="Genomic_DNA"/>
</dbReference>
<dbReference type="RefSeq" id="WP_012573650.1">
    <property type="nucleotide sequence ID" value="NC_011565.1"/>
</dbReference>
<dbReference type="SMR" id="B6YRR8"/>
<dbReference type="STRING" id="511995.CFPG_627"/>
<dbReference type="KEGG" id="aps:CFPG_627"/>
<dbReference type="eggNOG" id="COG1195">
    <property type="taxonomic scope" value="Bacteria"/>
</dbReference>
<dbReference type="HOGENOM" id="CLU_040267_0_1_10"/>
<dbReference type="OrthoDB" id="9803889at2"/>
<dbReference type="Proteomes" id="UP000000723">
    <property type="component" value="Chromosome"/>
</dbReference>
<dbReference type="GO" id="GO:0005737">
    <property type="term" value="C:cytoplasm"/>
    <property type="evidence" value="ECO:0007669"/>
    <property type="project" value="UniProtKB-SubCell"/>
</dbReference>
<dbReference type="GO" id="GO:0005524">
    <property type="term" value="F:ATP binding"/>
    <property type="evidence" value="ECO:0007669"/>
    <property type="project" value="UniProtKB-UniRule"/>
</dbReference>
<dbReference type="GO" id="GO:0003697">
    <property type="term" value="F:single-stranded DNA binding"/>
    <property type="evidence" value="ECO:0007669"/>
    <property type="project" value="UniProtKB-UniRule"/>
</dbReference>
<dbReference type="GO" id="GO:0006260">
    <property type="term" value="P:DNA replication"/>
    <property type="evidence" value="ECO:0007669"/>
    <property type="project" value="UniProtKB-UniRule"/>
</dbReference>
<dbReference type="GO" id="GO:0000731">
    <property type="term" value="P:DNA synthesis involved in DNA repair"/>
    <property type="evidence" value="ECO:0007669"/>
    <property type="project" value="TreeGrafter"/>
</dbReference>
<dbReference type="GO" id="GO:0006302">
    <property type="term" value="P:double-strand break repair"/>
    <property type="evidence" value="ECO:0007669"/>
    <property type="project" value="TreeGrafter"/>
</dbReference>
<dbReference type="GO" id="GO:0009432">
    <property type="term" value="P:SOS response"/>
    <property type="evidence" value="ECO:0007669"/>
    <property type="project" value="UniProtKB-UniRule"/>
</dbReference>
<dbReference type="Gene3D" id="3.40.50.300">
    <property type="entry name" value="P-loop containing nucleotide triphosphate hydrolases"/>
    <property type="match status" value="1"/>
</dbReference>
<dbReference type="Gene3D" id="1.20.1050.90">
    <property type="entry name" value="RecF/RecN/SMC, N-terminal domain"/>
    <property type="match status" value="1"/>
</dbReference>
<dbReference type="HAMAP" id="MF_00365">
    <property type="entry name" value="RecF"/>
    <property type="match status" value="1"/>
</dbReference>
<dbReference type="InterPro" id="IPR001238">
    <property type="entry name" value="DNA-binding_RecF"/>
</dbReference>
<dbReference type="InterPro" id="IPR018078">
    <property type="entry name" value="DNA-binding_RecF_CS"/>
</dbReference>
<dbReference type="InterPro" id="IPR027417">
    <property type="entry name" value="P-loop_NTPase"/>
</dbReference>
<dbReference type="InterPro" id="IPR003395">
    <property type="entry name" value="RecF/RecN/SMC_N"/>
</dbReference>
<dbReference type="InterPro" id="IPR042174">
    <property type="entry name" value="RecF_2"/>
</dbReference>
<dbReference type="NCBIfam" id="TIGR00611">
    <property type="entry name" value="recf"/>
    <property type="match status" value="1"/>
</dbReference>
<dbReference type="PANTHER" id="PTHR32182">
    <property type="entry name" value="DNA REPLICATION AND REPAIR PROTEIN RECF"/>
    <property type="match status" value="1"/>
</dbReference>
<dbReference type="PANTHER" id="PTHR32182:SF0">
    <property type="entry name" value="DNA REPLICATION AND REPAIR PROTEIN RECF"/>
    <property type="match status" value="1"/>
</dbReference>
<dbReference type="Pfam" id="PF02463">
    <property type="entry name" value="SMC_N"/>
    <property type="match status" value="1"/>
</dbReference>
<dbReference type="SUPFAM" id="SSF52540">
    <property type="entry name" value="P-loop containing nucleoside triphosphate hydrolases"/>
    <property type="match status" value="1"/>
</dbReference>
<dbReference type="PROSITE" id="PS00618">
    <property type="entry name" value="RECF_2"/>
    <property type="match status" value="1"/>
</dbReference>
<reference key="1">
    <citation type="journal article" date="2008" name="Science">
        <title>Genome of an endosymbiont coupling N2 fixation to cellulolysis within RT protist cells in termite gut.</title>
        <authorList>
            <person name="Hongoh Y."/>
            <person name="Sharma V.K."/>
            <person name="Prakash T."/>
            <person name="Noda S."/>
            <person name="Toh H."/>
            <person name="Taylor T.D."/>
            <person name="Kudo T."/>
            <person name="Sakaki Y."/>
            <person name="Toyoda A."/>
            <person name="Hattori M."/>
            <person name="Ohkuma M."/>
        </authorList>
    </citation>
    <scope>NUCLEOTIDE SEQUENCE [LARGE SCALE GENOMIC DNA]</scope>
</reference>
<proteinExistence type="inferred from homology"/>
<comment type="function">
    <text evidence="1">The RecF protein is involved in DNA metabolism; it is required for DNA replication and normal SOS inducibility. RecF binds preferentially to single-stranded, linear DNA. It also seems to bind ATP.</text>
</comment>
<comment type="subcellular location">
    <subcellularLocation>
        <location evidence="1">Cytoplasm</location>
    </subcellularLocation>
</comment>
<comment type="similarity">
    <text evidence="1">Belongs to the RecF family.</text>
</comment>